<name>GTR10_XENLA</name>
<evidence type="ECO:0000250" key="1">
    <source>
        <dbReference type="UniProtKB" id="O95528"/>
    </source>
</evidence>
<evidence type="ECO:0000250" key="2">
    <source>
        <dbReference type="UniProtKB" id="P11169"/>
    </source>
</evidence>
<evidence type="ECO:0000255" key="3"/>
<evidence type="ECO:0000256" key="4">
    <source>
        <dbReference type="SAM" id="MobiDB-lite"/>
    </source>
</evidence>
<evidence type="ECO:0000305" key="5"/>
<keyword id="KW-0963">Cytoplasm</keyword>
<keyword id="KW-0325">Glycoprotein</keyword>
<keyword id="KW-0472">Membrane</keyword>
<keyword id="KW-1185">Reference proteome</keyword>
<keyword id="KW-0762">Sugar transport</keyword>
<keyword id="KW-0812">Transmembrane</keyword>
<keyword id="KW-1133">Transmembrane helix</keyword>
<keyword id="KW-0813">Transport</keyword>
<protein>
    <recommendedName>
        <fullName evidence="5">Solute carrier family 2, facilitated glucose transporter member 10</fullName>
    </recommendedName>
    <alternativeName>
        <fullName evidence="1">Glucose transporter type 10</fullName>
        <shortName evidence="1">GLUT-10</shortName>
    </alternativeName>
</protein>
<gene>
    <name evidence="1" type="primary">slc2a10</name>
    <name evidence="1" type="synonym">glut10</name>
</gene>
<organism>
    <name type="scientific">Xenopus laevis</name>
    <name type="common">African clawed frog</name>
    <dbReference type="NCBI Taxonomy" id="8355"/>
    <lineage>
        <taxon>Eukaryota</taxon>
        <taxon>Metazoa</taxon>
        <taxon>Chordata</taxon>
        <taxon>Craniata</taxon>
        <taxon>Vertebrata</taxon>
        <taxon>Euteleostomi</taxon>
        <taxon>Amphibia</taxon>
        <taxon>Batrachia</taxon>
        <taxon>Anura</taxon>
        <taxon>Pipoidea</taxon>
        <taxon>Pipidae</taxon>
        <taxon>Xenopodinae</taxon>
        <taxon>Xenopus</taxon>
        <taxon>Xenopus</taxon>
    </lineage>
</organism>
<feature type="chain" id="PRO_0000270193" description="Solute carrier family 2, facilitated glucose transporter member 10">
    <location>
        <begin position="1"/>
        <end position="553"/>
    </location>
</feature>
<feature type="topological domain" description="Cytoplasmic" evidence="3">
    <location>
        <begin position="1"/>
        <end position="15"/>
    </location>
</feature>
<feature type="transmembrane region" description="Helical; Name=1" evidence="3">
    <location>
        <begin position="16"/>
        <end position="36"/>
    </location>
</feature>
<feature type="topological domain" description="Extracellular" evidence="3">
    <location>
        <begin position="37"/>
        <end position="48"/>
    </location>
</feature>
<feature type="transmembrane region" description="Helical; Name=2" evidence="3">
    <location>
        <begin position="49"/>
        <end position="69"/>
    </location>
</feature>
<feature type="topological domain" description="Cytoplasmic" evidence="3">
    <location>
        <begin position="70"/>
        <end position="82"/>
    </location>
</feature>
<feature type="transmembrane region" description="Helical; Name=3" evidence="3">
    <location>
        <begin position="83"/>
        <end position="103"/>
    </location>
</feature>
<feature type="topological domain" description="Extracellular" evidence="3">
    <location>
        <begin position="104"/>
        <end position="105"/>
    </location>
</feature>
<feature type="transmembrane region" description="Helical; Name=4" evidence="3">
    <location>
        <begin position="106"/>
        <end position="126"/>
    </location>
</feature>
<feature type="topological domain" description="Cytoplasmic" evidence="3">
    <location>
        <begin position="127"/>
        <end position="132"/>
    </location>
</feature>
<feature type="transmembrane region" description="Helical; Name=5" evidence="3">
    <location>
        <begin position="133"/>
        <end position="153"/>
    </location>
</feature>
<feature type="topological domain" description="Extracellular" evidence="3">
    <location>
        <begin position="154"/>
        <end position="165"/>
    </location>
</feature>
<feature type="transmembrane region" description="Helical; Name=6" evidence="3">
    <location>
        <begin position="166"/>
        <end position="186"/>
    </location>
</feature>
<feature type="topological domain" description="Cytoplasmic" evidence="3">
    <location>
        <begin position="187"/>
        <end position="240"/>
    </location>
</feature>
<feature type="transmembrane region" description="Helical; Name=7" evidence="3">
    <location>
        <begin position="241"/>
        <end position="261"/>
    </location>
</feature>
<feature type="topological domain" description="Extracellular" evidence="3">
    <location>
        <begin position="262"/>
        <end position="277"/>
    </location>
</feature>
<feature type="transmembrane region" description="Helical; Name=8" evidence="3">
    <location>
        <begin position="278"/>
        <end position="298"/>
    </location>
</feature>
<feature type="topological domain" description="Cytoplasmic" evidence="3">
    <location>
        <begin position="299"/>
        <end position="305"/>
    </location>
</feature>
<feature type="transmembrane region" description="Helical; Name=9" evidence="3">
    <location>
        <begin position="306"/>
        <end position="326"/>
    </location>
</feature>
<feature type="topological domain" description="Extracellular" evidence="3">
    <location>
        <begin position="327"/>
        <end position="413"/>
    </location>
</feature>
<feature type="transmembrane region" description="Helical; Name=10" evidence="3">
    <location>
        <begin position="414"/>
        <end position="434"/>
    </location>
</feature>
<feature type="topological domain" description="Cytoplasmic" evidence="3">
    <location>
        <begin position="435"/>
        <end position="462"/>
    </location>
</feature>
<feature type="transmembrane region" description="Helical; Name=11" evidence="3">
    <location>
        <begin position="463"/>
        <end position="482"/>
    </location>
</feature>
<feature type="topological domain" description="Extracellular" evidence="3">
    <location>
        <position position="483"/>
    </location>
</feature>
<feature type="transmembrane region" description="Helical; Name=12" evidence="3">
    <location>
        <begin position="484"/>
        <end position="504"/>
    </location>
</feature>
<feature type="topological domain" description="Cytoplasmic" evidence="3">
    <location>
        <begin position="505"/>
        <end position="553"/>
    </location>
</feature>
<feature type="region of interest" description="Disordered" evidence="4">
    <location>
        <begin position="522"/>
        <end position="553"/>
    </location>
</feature>
<feature type="binding site" evidence="2">
    <location>
        <begin position="250"/>
        <end position="251"/>
    </location>
    <ligand>
        <name>D-glucose</name>
        <dbReference type="ChEBI" id="CHEBI:4167"/>
    </ligand>
</feature>
<feature type="binding site" evidence="2">
    <location>
        <position position="439"/>
    </location>
    <ligand>
        <name>D-glucose</name>
        <dbReference type="ChEBI" id="CHEBI:4167"/>
    </ligand>
</feature>
<feature type="glycosylation site" description="N-linked (GlcNAc...) asparagine" evidence="3">
    <location>
        <position position="274"/>
    </location>
</feature>
<feature type="glycosylation site" description="N-linked (GlcNAc...) asparagine" evidence="3">
    <location>
        <position position="344"/>
    </location>
</feature>
<feature type="glycosylation site" description="N-linked (GlcNAc...) asparagine" evidence="3">
    <location>
        <position position="351"/>
    </location>
</feature>
<feature type="glycosylation site" description="N-linked (GlcNAc...) asparagine" evidence="3">
    <location>
        <position position="400"/>
    </location>
</feature>
<proteinExistence type="evidence at transcript level"/>
<dbReference type="EMBL" id="BC073721">
    <property type="protein sequence ID" value="AAH73721.1"/>
    <property type="molecule type" value="mRNA"/>
</dbReference>
<dbReference type="RefSeq" id="NP_001086029.1">
    <property type="nucleotide sequence ID" value="NM_001092560.1"/>
</dbReference>
<dbReference type="SMR" id="Q6GN01"/>
<dbReference type="GlyCosmos" id="Q6GN01">
    <property type="glycosylation" value="4 sites, No reported glycans"/>
</dbReference>
<dbReference type="DNASU" id="444458"/>
<dbReference type="GeneID" id="444458"/>
<dbReference type="KEGG" id="xla:444458"/>
<dbReference type="AGR" id="Xenbase:XB-GENE-950495"/>
<dbReference type="CTD" id="444458"/>
<dbReference type="Xenbase" id="XB-GENE-950495">
    <property type="gene designation" value="slc2a10.S"/>
</dbReference>
<dbReference type="OrthoDB" id="4142200at2759"/>
<dbReference type="Proteomes" id="UP000186698">
    <property type="component" value="Chromosome 9_10S"/>
</dbReference>
<dbReference type="Bgee" id="444458">
    <property type="expression patterns" value="Expressed in blastula and 18 other cell types or tissues"/>
</dbReference>
<dbReference type="GO" id="GO:0012505">
    <property type="term" value="C:endomembrane system"/>
    <property type="evidence" value="ECO:0007669"/>
    <property type="project" value="UniProtKB-SubCell"/>
</dbReference>
<dbReference type="GO" id="GO:0016020">
    <property type="term" value="C:membrane"/>
    <property type="evidence" value="ECO:0000318"/>
    <property type="project" value="GO_Central"/>
</dbReference>
<dbReference type="GO" id="GO:0048471">
    <property type="term" value="C:perinuclear region of cytoplasm"/>
    <property type="evidence" value="ECO:0007669"/>
    <property type="project" value="UniProtKB-SubCell"/>
</dbReference>
<dbReference type="GO" id="GO:0055056">
    <property type="term" value="F:D-glucose transmembrane transporter activity"/>
    <property type="evidence" value="ECO:0000318"/>
    <property type="project" value="GO_Central"/>
</dbReference>
<dbReference type="GO" id="GO:0072359">
    <property type="term" value="P:circulatory system development"/>
    <property type="evidence" value="ECO:0000318"/>
    <property type="project" value="GO_Central"/>
</dbReference>
<dbReference type="GO" id="GO:1904659">
    <property type="term" value="P:D-glucose transmembrane transport"/>
    <property type="evidence" value="ECO:0000318"/>
    <property type="project" value="GO_Central"/>
</dbReference>
<dbReference type="CDD" id="cd17436">
    <property type="entry name" value="MFS_GLUT10_Class3"/>
    <property type="match status" value="1"/>
</dbReference>
<dbReference type="FunFam" id="1.20.1250.20:FF:000790">
    <property type="entry name" value="Solute carrier family 2 member 10"/>
    <property type="match status" value="1"/>
</dbReference>
<dbReference type="FunFam" id="1.20.1250.20:FF:000164">
    <property type="entry name" value="solute carrier family 2, facilitated glucose transporter member 10"/>
    <property type="match status" value="1"/>
</dbReference>
<dbReference type="Gene3D" id="1.20.1250.20">
    <property type="entry name" value="MFS general substrate transporter like domains"/>
    <property type="match status" value="2"/>
</dbReference>
<dbReference type="InterPro" id="IPR020846">
    <property type="entry name" value="MFS_dom"/>
</dbReference>
<dbReference type="InterPro" id="IPR005828">
    <property type="entry name" value="MFS_sugar_transport-like"/>
</dbReference>
<dbReference type="InterPro" id="IPR050820">
    <property type="entry name" value="MFS_Sugar_Transporter"/>
</dbReference>
<dbReference type="InterPro" id="IPR036259">
    <property type="entry name" value="MFS_trans_sf"/>
</dbReference>
<dbReference type="InterPro" id="IPR003663">
    <property type="entry name" value="Sugar/inositol_transpt"/>
</dbReference>
<dbReference type="InterPro" id="IPR005829">
    <property type="entry name" value="Sugar_transporter_CS"/>
</dbReference>
<dbReference type="PANTHER" id="PTHR48023">
    <property type="entry name" value="D-XYLOSE-PROTON SYMPORTER-LIKE 2"/>
    <property type="match status" value="1"/>
</dbReference>
<dbReference type="PANTHER" id="PTHR48023:SF7">
    <property type="entry name" value="SOLUTE CARRIER FAMILY 2, FACILITATED GLUCOSE TRANSPORTER MEMBER 10"/>
    <property type="match status" value="1"/>
</dbReference>
<dbReference type="Pfam" id="PF00083">
    <property type="entry name" value="Sugar_tr"/>
    <property type="match status" value="2"/>
</dbReference>
<dbReference type="PRINTS" id="PR00171">
    <property type="entry name" value="SUGRTRNSPORT"/>
</dbReference>
<dbReference type="SUPFAM" id="SSF103473">
    <property type="entry name" value="MFS general substrate transporter"/>
    <property type="match status" value="1"/>
</dbReference>
<dbReference type="PROSITE" id="PS50850">
    <property type="entry name" value="MFS"/>
    <property type="match status" value="1"/>
</dbReference>
<dbReference type="PROSITE" id="PS00216">
    <property type="entry name" value="SUGAR_TRANSPORT_1"/>
    <property type="match status" value="1"/>
</dbReference>
<reference key="1">
    <citation type="submission" date="2004-06" db="EMBL/GenBank/DDBJ databases">
        <authorList>
            <consortium name="NIH - Xenopus Gene Collection (XGC) project"/>
        </authorList>
    </citation>
    <scope>NUCLEOTIDE SEQUENCE [LARGE SCALE MRNA]</scope>
    <source>
        <tissue>Oocyte</tissue>
    </source>
</reference>
<comment type="function">
    <text evidence="1">Facilitative glucose transporter required for the development of the cardiovascular system.</text>
</comment>
<comment type="catalytic activity">
    <reaction evidence="1">
        <text>D-glucose(out) = D-glucose(in)</text>
        <dbReference type="Rhea" id="RHEA:60376"/>
        <dbReference type="ChEBI" id="CHEBI:4167"/>
    </reaction>
</comment>
<comment type="subcellular location">
    <subcellularLocation>
        <location evidence="1">Endomembrane system</location>
        <topology evidence="3">Multi-pass membrane protein</topology>
    </subcellularLocation>
    <subcellularLocation>
        <location evidence="1">Cytoplasm</location>
        <location evidence="1">Perinuclear region</location>
    </subcellularLocation>
</comment>
<comment type="similarity">
    <text evidence="5">Belongs to the major facilitator superfamily. Sugar transporter (TC 2.A.1.1) family. Glucose transporter subfamily.</text>
</comment>
<accession>Q6GN01</accession>
<sequence>MGLRSTTLVLAATSSLLGGLIFGYELGIISGALLMLKTVFQLTCFEQEALVSAVLFGALLASLIGGFIIDRSGRRTSIMGSNLVVLAGSIILIATSSFWWLVVGRVTVGFAISISSMACCIYVSEIVRPHQRGTLVSLYETGITVGILISYAMNYFLSAVNDGWKYMFGLAIIPAAFQFIVILFLPSKPHTLNFWEQDSDNGFIELEEAGESGEFKPDTYDKQYTFLDLFRSKDNMRTRTLLGLGLVLFQQFTGQPNVLYYASTIFRSVGFQSNSSAVLASVGLGVVKVASTLIAICFADKAGRRILLLAGCIVMTIAISGIGIVSFMVELDSHRDCGSIRSKNTSYGDSNASQLLGIIHAGTPTINTKDNLAHQLAMVIQSPSLSNSAGSKHTASMFPNSTVPPAGPDSNYAILNWITLLSMMAFVSAFSIGFGPMTWLVLSEIYPADIRGRAFAFCNSFNWAANLLITLTFLEVIGSIGLGWTFLLYGGVGLLAIAFIYFFIPETKGQSLEEIDQQLSSKRISKRRETSKGVRKRPSTGPPYQRVGKSNWT</sequence>